<name>NSP1_ROTHK</name>
<organism>
    <name type="scientific">Rotavirus A (strain RVA/Human/Japan/KU/1995/G1P1A[8])</name>
    <name type="common">RV-A</name>
    <dbReference type="NCBI Taxonomy" id="10952"/>
    <lineage>
        <taxon>Viruses</taxon>
        <taxon>Riboviria</taxon>
        <taxon>Orthornavirae</taxon>
        <taxon>Duplornaviricota</taxon>
        <taxon>Resentoviricetes</taxon>
        <taxon>Reovirales</taxon>
        <taxon>Sedoreoviridae</taxon>
        <taxon>Rotavirus</taxon>
        <taxon>Rotavirus A</taxon>
    </lineage>
</organism>
<accession>Q9QNA9</accession>
<organismHost>
    <name type="scientific">Homo sapiens</name>
    <name type="common">Human</name>
    <dbReference type="NCBI Taxonomy" id="9606"/>
</organismHost>
<comment type="function">
    <text evidence="1">Plays a role in the inhibition of host innate immunity by inducing the degradation of key host factors required to activate interferon production such as IRF3, IRF5 or IRF7. Associates with components of cullin RING ligases (CRLs) including CUL1 or CUL3, which are essential multisubunit ubiquitination complexes, to modulate their activities. Recognizes the host NF-kappa-B regulator BTRC through the presence of a DSGXS motif in the C-terminal substrate recognition domain.</text>
</comment>
<comment type="subunit">
    <text evidence="1">Interacts (via C-terminus) with host IRF3; this interaction leads to IRF3 degradation. Interacts with host IRF7; this interaction leads to IRF7 degradation. Interacts with host CUL1 and CUL3. Interacts with host BTRC.</text>
</comment>
<comment type="subcellular location">
    <subcellularLocation>
        <location evidence="1">Host cytoplasm</location>
        <location evidence="1">Host cytoskeleton</location>
    </subcellularLocation>
</comment>
<comment type="domain">
    <text evidence="1">The integrity of the zinc-binding domain in NSP1 is important for degradation of host IRF3.</text>
</comment>
<comment type="domain">
    <text evidence="1">The pLxIS motif targets host IRF3 for degradation; however phosphorylation of NSP1 pLxIS motif is not required for its activity.</text>
</comment>
<comment type="PTM">
    <text evidence="1">The C-terminal region is phosphorylated by host CKII/CSNK2A1. Phosphorylation of the DSGXS motif is essential for host NF-kappa-B inhibition.</text>
</comment>
<comment type="similarity">
    <text evidence="1">Belongs to the rotavirus NSP1 family.</text>
</comment>
<sequence length="486" mass="57611">MATFKDACYHYKRINKLNNTVLKLGVNDTWRPSPPTKYKGWCLDCCQHTDLTYCRGCTMYHVCQWCSQYGRCFLDNEPHLLRMRTFKNEVTKDELKNLIDMYDTLFPMNQKIVCRFISNTRQHKCRNECMTQWYNHLLMPITLQSLAIELDGDIYYVFGYYDNMNSINQTPFSFTNLVDIYDKLLLDNVNFVRMSFLPASLQQEYALRYFSKSRFISEQRKCVNDSHFSINVLENLHNPNFKIQITRNCSEMSFDWNEACKLVKNAGAYFDILKTSHIEFYSVSTRCRIFTQCKLKIASKLIIPNYITSNHKTLATEVHNCEWCSVNNSYTVWNDFRIKKIYDKVFNFLRAFSKFNINIGHCSSQEKMYEYVEDVLNVCNDERWKTSIIEIFNCLEPVELDDVKYVLFNHEINWDVINVLVHSIGKVPQILTLENVITIIQSIIYEWFDIRYMRNTPMVTFTIDKLRRLHTGLKTVEDDSGISDVE</sequence>
<protein>
    <recommendedName>
        <fullName evidence="1">Non-structural protein 1</fullName>
        <shortName evidence="1">NSP1</shortName>
    </recommendedName>
    <alternativeName>
        <fullName evidence="1">NCVP2</fullName>
    </alternativeName>
    <alternativeName>
        <fullName evidence="1">Non-structural RNA-binding protein 53</fullName>
        <shortName evidence="1">NS53</shortName>
    </alternativeName>
</protein>
<feature type="chain" id="PRO_0000369084" description="Non-structural protein 1">
    <location>
        <begin position="1"/>
        <end position="486"/>
    </location>
</feature>
<feature type="region of interest" description="RNA-binding" evidence="1">
    <location>
        <begin position="1"/>
        <end position="81"/>
    </location>
</feature>
<feature type="region of interest" description="Zinc-binding domain" evidence="1">
    <location>
        <begin position="42"/>
        <end position="79"/>
    </location>
</feature>
<feature type="region of interest" description="Important for cytoskeleton localization" evidence="1">
    <location>
        <begin position="82"/>
        <end position="176"/>
    </location>
</feature>
<feature type="region of interest" description="Interaction with host IRF3" evidence="1">
    <location>
        <begin position="317"/>
        <end position="486"/>
    </location>
</feature>
<feature type="short sequence motif" description="IKBKB-like degron (ILD) motif" evidence="1">
    <location>
        <begin position="479"/>
        <end position="483"/>
    </location>
</feature>
<feature type="short sequence motif" description="pLxIS motif" evidence="1">
    <location>
        <begin position="480"/>
        <end position="483"/>
    </location>
</feature>
<keyword id="KW-1035">Host cytoplasm</keyword>
<keyword id="KW-1037">Host cytoskeleton</keyword>
<keyword id="KW-0945">Host-virus interaction</keyword>
<keyword id="KW-1090">Inhibition of host innate immune response by virus</keyword>
<keyword id="KW-1092">Inhibition of host IRF3 by virus</keyword>
<keyword id="KW-1093">Inhibition of host IRF7 by virus</keyword>
<keyword id="KW-1100">Inhibition of host NF-kappa-B by virus</keyword>
<keyword id="KW-1113">Inhibition of host RLR pathway by virus</keyword>
<keyword id="KW-0922">Interferon antiviral system evasion</keyword>
<keyword id="KW-0479">Metal-binding</keyword>
<keyword id="KW-0597">Phosphoprotein</keyword>
<keyword id="KW-0694">RNA-binding</keyword>
<keyword id="KW-0899">Viral immunoevasion</keyword>
<dbReference type="EMBL" id="AB022769">
    <property type="protein sequence ID" value="BAA84966.1"/>
    <property type="molecule type" value="mRNA"/>
</dbReference>
<dbReference type="Proteomes" id="UP000001458">
    <property type="component" value="Genome"/>
</dbReference>
<dbReference type="GO" id="GO:0030430">
    <property type="term" value="C:host cell cytoplasm"/>
    <property type="evidence" value="ECO:0007669"/>
    <property type="project" value="UniProtKB-UniRule"/>
</dbReference>
<dbReference type="GO" id="GO:0044163">
    <property type="term" value="C:host cytoskeleton"/>
    <property type="evidence" value="ECO:0007669"/>
    <property type="project" value="UniProtKB-SubCell"/>
</dbReference>
<dbReference type="GO" id="GO:0046872">
    <property type="term" value="F:metal ion binding"/>
    <property type="evidence" value="ECO:0007669"/>
    <property type="project" value="UniProtKB-UniRule"/>
</dbReference>
<dbReference type="GO" id="GO:0003723">
    <property type="term" value="F:RNA binding"/>
    <property type="evidence" value="ECO:0007669"/>
    <property type="project" value="UniProtKB-UniRule"/>
</dbReference>
<dbReference type="GO" id="GO:0039548">
    <property type="term" value="P:symbiont-mediated suppression of host cytoplasmic pattern recognition receptor signaling pathway via inhibition of IRF3 activity"/>
    <property type="evidence" value="ECO:0007669"/>
    <property type="project" value="UniProtKB-UniRule"/>
</dbReference>
<dbReference type="GO" id="GO:0039557">
    <property type="term" value="P:symbiont-mediated suppression of host cytoplasmic pattern recognition receptor signaling pathway via inhibition of IRF7 activity"/>
    <property type="evidence" value="ECO:0007669"/>
    <property type="project" value="UniProtKB-UniRule"/>
</dbReference>
<dbReference type="GO" id="GO:0085034">
    <property type="term" value="P:symbiont-mediated suppression of host NF-kappaB cascade"/>
    <property type="evidence" value="ECO:0007669"/>
    <property type="project" value="UniProtKB-UniRule"/>
</dbReference>
<dbReference type="HAMAP" id="MF_04088">
    <property type="entry name" value="ROTA_NSP1"/>
    <property type="match status" value="1"/>
</dbReference>
<dbReference type="InterPro" id="IPR002148">
    <property type="entry name" value="Rotavirus_NSP1"/>
</dbReference>
<dbReference type="Pfam" id="PF00981">
    <property type="entry name" value="Rota_NS53"/>
    <property type="match status" value="1"/>
</dbReference>
<reference key="1">
    <citation type="journal article" date="1999" name="Arch. Virol.">
        <title>Functional analysis of the heterologous NSP1 genes in the genetic background of simian rotavirus SA11.</title>
        <authorList>
            <person name="Okada J."/>
            <person name="Kobayashi N."/>
            <person name="Taniguchi K."/>
            <person name="Shiomi H."/>
        </authorList>
    </citation>
    <scope>NUCLEOTIDE SEQUENCE [MRNA]</scope>
</reference>
<evidence type="ECO:0000255" key="1">
    <source>
        <dbReference type="HAMAP-Rule" id="MF_04088"/>
    </source>
</evidence>
<proteinExistence type="evidence at transcript level"/>